<evidence type="ECO:0000256" key="1">
    <source>
        <dbReference type="SAM" id="MobiDB-lite"/>
    </source>
</evidence>
<evidence type="ECO:0000269" key="2">
    <source>
    </source>
</evidence>
<evidence type="ECO:0000269" key="3">
    <source>
    </source>
</evidence>
<evidence type="ECO:0000269" key="4">
    <source>
    </source>
</evidence>
<evidence type="ECO:0000269" key="5">
    <source>
    </source>
</evidence>
<evidence type="ECO:0000305" key="6"/>
<evidence type="ECO:0000305" key="7">
    <source>
    </source>
</evidence>
<evidence type="ECO:0000305" key="8">
    <source>
    </source>
</evidence>
<evidence type="ECO:0007744" key="9">
    <source>
    </source>
</evidence>
<reference key="1">
    <citation type="journal article" date="1999" name="Nature">
        <title>Sequence and analysis of chromosome 2 of the plant Arabidopsis thaliana.</title>
        <authorList>
            <person name="Lin X."/>
            <person name="Kaul S."/>
            <person name="Rounsley S.D."/>
            <person name="Shea T.P."/>
            <person name="Benito M.-I."/>
            <person name="Town C.D."/>
            <person name="Fujii C.Y."/>
            <person name="Mason T.M."/>
            <person name="Bowman C.L."/>
            <person name="Barnstead M.E."/>
            <person name="Feldblyum T.V."/>
            <person name="Buell C.R."/>
            <person name="Ketchum K.A."/>
            <person name="Lee J.J."/>
            <person name="Ronning C.M."/>
            <person name="Koo H.L."/>
            <person name="Moffat K.S."/>
            <person name="Cronin L.A."/>
            <person name="Shen M."/>
            <person name="Pai G."/>
            <person name="Van Aken S."/>
            <person name="Umayam L."/>
            <person name="Tallon L.J."/>
            <person name="Gill J.E."/>
            <person name="Adams M.D."/>
            <person name="Carrera A.J."/>
            <person name="Creasy T.H."/>
            <person name="Goodman H.M."/>
            <person name="Somerville C.R."/>
            <person name="Copenhaver G.P."/>
            <person name="Preuss D."/>
            <person name="Nierman W.C."/>
            <person name="White O."/>
            <person name="Eisen J.A."/>
            <person name="Salzberg S.L."/>
            <person name="Fraser C.M."/>
            <person name="Venter J.C."/>
        </authorList>
    </citation>
    <scope>NUCLEOTIDE SEQUENCE [LARGE SCALE GENOMIC DNA]</scope>
    <source>
        <strain>cv. Columbia</strain>
    </source>
</reference>
<reference key="2">
    <citation type="journal article" date="2017" name="Plant J.">
        <title>Araport11: a complete reannotation of the Arabidopsis thaliana reference genome.</title>
        <authorList>
            <person name="Cheng C.Y."/>
            <person name="Krishnakumar V."/>
            <person name="Chan A.P."/>
            <person name="Thibaud-Nissen F."/>
            <person name="Schobel S."/>
            <person name="Town C.D."/>
        </authorList>
    </citation>
    <scope>GENOME REANNOTATION</scope>
    <source>
        <strain>cv. Columbia</strain>
    </source>
</reference>
<reference key="3">
    <citation type="journal article" date="2003" name="Science">
        <title>Empirical analysis of transcriptional activity in the Arabidopsis genome.</title>
        <authorList>
            <person name="Yamada K."/>
            <person name="Lim J."/>
            <person name="Dale J.M."/>
            <person name="Chen H."/>
            <person name="Shinn P."/>
            <person name="Palm C.J."/>
            <person name="Southwick A.M."/>
            <person name="Wu H.C."/>
            <person name="Kim C.J."/>
            <person name="Nguyen M."/>
            <person name="Pham P.K."/>
            <person name="Cheuk R.F."/>
            <person name="Karlin-Newmann G."/>
            <person name="Liu S.X."/>
            <person name="Lam B."/>
            <person name="Sakano H."/>
            <person name="Wu T."/>
            <person name="Yu G."/>
            <person name="Miranda M."/>
            <person name="Quach H.L."/>
            <person name="Tripp M."/>
            <person name="Chang C.H."/>
            <person name="Lee J.M."/>
            <person name="Toriumi M.J."/>
            <person name="Chan M.M."/>
            <person name="Tang C.C."/>
            <person name="Onodera C.S."/>
            <person name="Deng J.M."/>
            <person name="Akiyama K."/>
            <person name="Ansari Y."/>
            <person name="Arakawa T."/>
            <person name="Banh J."/>
            <person name="Banno F."/>
            <person name="Bowser L."/>
            <person name="Brooks S.Y."/>
            <person name="Carninci P."/>
            <person name="Chao Q."/>
            <person name="Choy N."/>
            <person name="Enju A."/>
            <person name="Goldsmith A.D."/>
            <person name="Gurjal M."/>
            <person name="Hansen N.F."/>
            <person name="Hayashizaki Y."/>
            <person name="Johnson-Hopson C."/>
            <person name="Hsuan V.W."/>
            <person name="Iida K."/>
            <person name="Karnes M."/>
            <person name="Khan S."/>
            <person name="Koesema E."/>
            <person name="Ishida J."/>
            <person name="Jiang P.X."/>
            <person name="Jones T."/>
            <person name="Kawai J."/>
            <person name="Kamiya A."/>
            <person name="Meyers C."/>
            <person name="Nakajima M."/>
            <person name="Narusaka M."/>
            <person name="Seki M."/>
            <person name="Sakurai T."/>
            <person name="Satou M."/>
            <person name="Tamse R."/>
            <person name="Vaysberg M."/>
            <person name="Wallender E.K."/>
            <person name="Wong C."/>
            <person name="Yamamura Y."/>
            <person name="Yuan S."/>
            <person name="Shinozaki K."/>
            <person name="Davis R.W."/>
            <person name="Theologis A."/>
            <person name="Ecker J.R."/>
        </authorList>
    </citation>
    <scope>NUCLEOTIDE SEQUENCE [LARGE SCALE MRNA]</scope>
    <source>
        <strain>cv. Columbia</strain>
    </source>
</reference>
<reference key="4">
    <citation type="submission" date="2006-07" db="EMBL/GenBank/DDBJ databases">
        <title>Large-scale analysis of RIKEN Arabidopsis full-length (RAFL) cDNAs.</title>
        <authorList>
            <person name="Totoki Y."/>
            <person name="Seki M."/>
            <person name="Ishida J."/>
            <person name="Nakajima M."/>
            <person name="Enju A."/>
            <person name="Kamiya A."/>
            <person name="Narusaka M."/>
            <person name="Shin-i T."/>
            <person name="Nakagawa M."/>
            <person name="Sakamoto N."/>
            <person name="Oishi K."/>
            <person name="Kohara Y."/>
            <person name="Kobayashi M."/>
            <person name="Toyoda A."/>
            <person name="Sakaki Y."/>
            <person name="Sakurai T."/>
            <person name="Iida K."/>
            <person name="Akiyama K."/>
            <person name="Satou M."/>
            <person name="Toyoda T."/>
            <person name="Konagaya A."/>
            <person name="Carninci P."/>
            <person name="Kawai J."/>
            <person name="Hayashizaki Y."/>
            <person name="Shinozaki K."/>
        </authorList>
    </citation>
    <scope>NUCLEOTIDE SEQUENCE [LARGE SCALE MRNA] OF 1-1031</scope>
    <source>
        <strain>cv. Columbia</strain>
    </source>
</reference>
<reference key="5">
    <citation type="journal article" date="2007" name="J. Cell Sci.">
        <title>CLASP localizes in two discrete patterns on cortical microtubules and is required for cell morphogenesis and cell division in Arabidopsis.</title>
        <authorList>
            <person name="Kirik V."/>
            <person name="Herrmann U."/>
            <person name="Parupalli C."/>
            <person name="Sedbrook J.C."/>
            <person name="Ehrhardt D.W."/>
            <person name="Huelskamp M."/>
        </authorList>
    </citation>
    <scope>FUNCTION</scope>
    <scope>DISRUPTION PHENOTYPE</scope>
    <scope>SUBCELLULAR LOCATION</scope>
    <scope>TISSUE SPECIFICITY</scope>
    <source>
        <strain>cv. Columbia</strain>
    </source>
</reference>
<reference key="6">
    <citation type="journal article" date="2007" name="Mol. Cell. Proteomics">
        <title>Multidimensional protein identification technology (MudPIT) analysis of ubiquitinated proteins in plants.</title>
        <authorList>
            <person name="Maor R."/>
            <person name="Jones A."/>
            <person name="Nuehse T.S."/>
            <person name="Studholme D.J."/>
            <person name="Peck S.C."/>
            <person name="Shirasu K."/>
        </authorList>
    </citation>
    <scope>IDENTIFICATION BY MASS SPECTROMETRY [LARGE SCALE ANALYSIS]</scope>
    <source>
        <strain>cv. Landsberg erecta</strain>
    </source>
</reference>
<reference key="7">
    <citation type="journal article" date="2007" name="Plant Cell">
        <title>The Arabidopsis CLASP gene encodes a microtubule-associated protein involved in cell expansion and division.</title>
        <authorList>
            <person name="Ambrose J.C."/>
            <person name="Shoji T."/>
            <person name="Kotzer A.M."/>
            <person name="Pighin J.A."/>
            <person name="Wasteneys G.O."/>
        </authorList>
    </citation>
    <scope>FUNCTION</scope>
    <scope>DISRUPTION PHENOTYPE</scope>
    <scope>SUBCELLULAR LOCATION</scope>
</reference>
<reference key="8">
    <citation type="journal article" date="2008" name="Mol. Biol. Cell">
        <title>CLASP modulates microtubule-cortex interaction during self-organization of acentrosomal microtubules.</title>
        <authorList>
            <person name="Ambrose J.C."/>
            <person name="Wasteneys G.O."/>
        </authorList>
    </citation>
    <scope>FUNCTION</scope>
    <scope>DISRUPTION PHENOTYPE</scope>
</reference>
<reference key="9">
    <citation type="journal article" date="2009" name="Plant Physiol.">
        <title>Large-scale Arabidopsis phosphoproteome profiling reveals novel chloroplast kinase substrates and phosphorylation networks.</title>
        <authorList>
            <person name="Reiland S."/>
            <person name="Messerli G."/>
            <person name="Baerenfaller K."/>
            <person name="Gerrits B."/>
            <person name="Endler A."/>
            <person name="Grossmann J."/>
            <person name="Gruissem W."/>
            <person name="Baginsky S."/>
        </authorList>
    </citation>
    <scope>IDENTIFICATION BY MASS SPECTROMETRY [LARGE SCALE ANALYSIS]</scope>
</reference>
<reference key="10">
    <citation type="journal article" date="2011" name="Nat. Commun.">
        <title>A CLASP-modulated cell edge barrier mechanism drives cell-wide cortical microtubule organization in Arabidopsis.</title>
        <authorList>
            <person name="Ambrose C."/>
            <person name="Allard J.F."/>
            <person name="Cytrynbaum E.N."/>
            <person name="Wasteneys G.O."/>
        </authorList>
    </citation>
    <scope>FUNCTION</scope>
    <scope>SUBCELLULAR LOCATION</scope>
    <source>
        <strain>cv. Columbia</strain>
    </source>
</reference>
<reference key="11">
    <citation type="journal article" date="2012" name="Cell">
        <title>A PLETHORA-auxin transcription module controls cell division plane rotation through MAP65 and CLASP.</title>
        <authorList>
            <person name="Dhonukshe P."/>
            <person name="Weits D.A."/>
            <person name="Cruz-Ramirez A."/>
            <person name="Deinum E.E."/>
            <person name="Tindemans S.H."/>
            <person name="Kakar K."/>
            <person name="Prasad K."/>
            <person name="Maehoenen A.P."/>
            <person name="Ambrose C."/>
            <person name="Sasabe M."/>
            <person name="Wachsmann G."/>
            <person name="Luijten M."/>
            <person name="Bennett T."/>
            <person name="Machida Y."/>
            <person name="Heidstra R."/>
            <person name="Wasteneys G."/>
            <person name="Mulder B.M."/>
            <person name="Scheres B."/>
        </authorList>
    </citation>
    <scope>RETRACTED PAPER</scope>
</reference>
<reference key="12">
    <citation type="journal article" date="2013" name="Cell">
        <authorList>
            <person name="Dhonukshe P."/>
            <person name="Weits D.A."/>
            <person name="Cruz-Ramirez A."/>
            <person name="Deinum E.E."/>
            <person name="Tindemans S.H."/>
            <person name="Kakar K."/>
            <person name="Prasad K."/>
            <person name="Maehoenen A.P."/>
            <person name="Ambrose C."/>
            <person name="Sasabe M."/>
            <person name="Wachsmann G."/>
            <person name="Luijten M."/>
            <person name="Bennett T."/>
            <person name="Machida Y."/>
            <person name="Heidstra R."/>
            <person name="Wasteneys G."/>
            <person name="Mulder B.M."/>
            <person name="Scheres B."/>
        </authorList>
    </citation>
    <scope>RETRACTION NOTICE OF PUBMED:22500804</scope>
</reference>
<reference key="13">
    <citation type="journal article" date="2012" name="Mol. Cell. Proteomics">
        <title>Comparative large-scale characterisation of plant vs. mammal proteins reveals similar and idiosyncratic N-alpha acetylation features.</title>
        <authorList>
            <person name="Bienvenut W.V."/>
            <person name="Sumpton D."/>
            <person name="Martinez A."/>
            <person name="Lilla S."/>
            <person name="Espagne C."/>
            <person name="Meinnel T."/>
            <person name="Giglione C."/>
        </authorList>
    </citation>
    <scope>ACETYLATION [LARGE SCALE ANALYSIS] AT MET-1</scope>
    <scope>IDENTIFICATION BY MASS SPECTROMETRY [LARGE SCALE ANALYSIS]</scope>
</reference>
<accession>Q8RWY6</accession>
<accession>Q0WVK2</accession>
<accession>Q9SK81</accession>
<accession>Q9SL62</accession>
<name>CLASP_ARATH</name>
<keyword id="KW-0007">Acetylation</keyword>
<keyword id="KW-0131">Cell cycle</keyword>
<keyword id="KW-0132">Cell division</keyword>
<keyword id="KW-0963">Cytoplasm</keyword>
<keyword id="KW-0206">Cytoskeleton</keyword>
<keyword id="KW-0493">Microtubule</keyword>
<keyword id="KW-0498">Mitosis</keyword>
<keyword id="KW-1185">Reference proteome</keyword>
<keyword id="KW-0677">Repeat</keyword>
<organism>
    <name type="scientific">Arabidopsis thaliana</name>
    <name type="common">Mouse-ear cress</name>
    <dbReference type="NCBI Taxonomy" id="3702"/>
    <lineage>
        <taxon>Eukaryota</taxon>
        <taxon>Viridiplantae</taxon>
        <taxon>Streptophyta</taxon>
        <taxon>Embryophyta</taxon>
        <taxon>Tracheophyta</taxon>
        <taxon>Spermatophyta</taxon>
        <taxon>Magnoliopsida</taxon>
        <taxon>eudicotyledons</taxon>
        <taxon>Gunneridae</taxon>
        <taxon>Pentapetalae</taxon>
        <taxon>rosids</taxon>
        <taxon>malvids</taxon>
        <taxon>Brassicales</taxon>
        <taxon>Brassicaceae</taxon>
        <taxon>Camelineae</taxon>
        <taxon>Arabidopsis</taxon>
    </lineage>
</organism>
<comment type="function">
    <text evidence="2 3 4 5">Cortical microtubule plus-end tracking protein required for cell morphogenesis and cell division. Promotes the stabilization of dynamic microtubules during mitosis. Regulates microtubule-cortex attachment, thereby contributing to self-organization of cortical microtubules and subsequent cell shape.</text>
</comment>
<comment type="subcellular location">
    <subcellularLocation>
        <location evidence="2 3">Cytoplasm</location>
        <location evidence="2 3">Cytoskeleton</location>
    </subcellularLocation>
    <subcellularLocation>
        <location evidence="2">Cytoplasm</location>
        <location evidence="2">Cytoskeleton</location>
        <location evidence="2">Spindle</location>
    </subcellularLocation>
    <subcellularLocation>
        <location evidence="2">Cytoplasm</location>
        <location evidence="2">Cytoskeleton</location>
        <location evidence="2">Phragmoplast</location>
    </subcellularLocation>
    <subcellularLocation>
        <location evidence="5">Cytoplasm</location>
        <location evidence="5">Cell cortex</location>
    </subcellularLocation>
    <text evidence="3">Associates with cortical microtubules.</text>
</comment>
<comment type="tissue specificity">
    <text evidence="3">Expressed at a low level in all tissues, mostly in young developing tissues.</text>
</comment>
<comment type="disruption phenotype">
    <text evidence="2 3 4">Various plant growth reductions (e.g. dwarf), cell form defects (e.g. reduced trichome branches number) and reduced mitotic activity. Less root cortical microtubule arrays hypersensitive to microtubule-destabilizing drugs. Aberrant microtubule preprophase bands, mitotic spindles, and phragmoplasts.</text>
</comment>
<comment type="similarity">
    <text evidence="6">Belongs to the CLASP family.</text>
</comment>
<comment type="caution">
    <text evidence="7 8">An article reported an auxin transcription module controlling cell division plane rotation through CLASP; however, this paper was later retracted.</text>
</comment>
<comment type="sequence caution" evidence="6">
    <conflict type="erroneous gene model prediction">
        <sequence resource="EMBL-CDS" id="AAD21767"/>
    </conflict>
    <text>Was originally thought to correspond to two different genes At2g20190 and At2g20200.</text>
</comment>
<comment type="sequence caution" evidence="6">
    <conflict type="erroneous gene model prediction">
        <sequence resource="EMBL-CDS" id="AAD24379"/>
    </conflict>
    <text>Was originally thought to correspond to two different genes At2g20190 and At2g20200.</text>
</comment>
<sequence length="1439" mass="158951">MEEALEMARAKDTKERMAAVERLHQLLEASRKSLSPAEVTSLVDSCLDLLKDSNFRVSQGALQALASAAVLAGEHLKLHLNALVPAVVERLGDSKQPVRDAARRLLTTLMEVSSPTIIVERAGSYAWMHKSWRVREEFARTVTSAIGLFASTELPLQRVILAPILQMLNDPNQAVREAAILCIEEMYMQGGSQFREELQRHHLPSYMVKDINARLERIEPQLRSTDGRSAHHVVNEVKASSVNPKKSSPRAKAPTRENSLFGGDADITEKPIEPIKVYSEKELIREFEKIAATLVPEKDWSMRISAMRRVEGLVAGGATDYSCFRGLLKQLVGPLSTQLADRRSTIVKQACHLLCLLSKELLGDFEACAETFIPVLFKLVVITVLVIAESADNCIKTMLRNCKAARVLPRIAESAKHDRNAILRARCCEYALLTLEHWPDAPEIQRSVDLYEDLIRCCVADAMSEVRATARMCYRMFAKTWPDRSRRLFSSFDPVIQRLINEEDGGIHRRHASPSVRERHSQPSFSQTSAPSNLPGYGTSAIVAMDRSSNLSSGGSLSSGLLLSQSKDVNKGSERSLESVLQSSKQKVSAIESMLRGLHISDRQNPAALRSSSLDLGVDPPSSRDPPFHAVAPASNSHTSSAAAESTHSINKGSNRNGGLGLSDIITQIQASKDSGRSSYRGNLLSESHPTFSSLTAKRGSERNERSSLEESNDAREVRRFMAGHFDRQQMDTAYRDLTFRESNASHVPNFQRPLLRKNVGGRMSAGRRRSFDDSQLQIGDISNFVDGPASLNEALNDGLNSSSDWCARVAAFNFLQTLLQQGPKGAQEVIQSFEKVMKLFLRHLDDPHHKVAQAALSTLADLIPSCRKPFESYMERVLPHVFSRLIDPKEVVRQPCSSTLEIVSKTYSVDSLLPALLRSLDEQRSPKAKLAVIEFAINSFNRYAGNPEISGNSGILKLWLAKLTPLTRDKNTKLKEASITCIISVYNHYDSAGLLNYILSLSVEEQNSLRRALKQYTPRIEVDLLNYMQSKKEKQRIKSYDPSDAIGTSSEEGYAGASKKNIFLGRYSGGSIDSDSGRKWSSSQEPTMITGGVGQNVSSGTQEKLYQNVRTGISSASDLLNPKDSDYTFASAGQNSISRTSPNGSSENIEILDDLSPPHLEKNGLNLTSVDSLEGRHENEVSRELDLGHYMLTSIKVNTTPESGPSIPQILHMINGSDGSPSSSKKSGLQQLIEASVANEESVWTKYFNQILTVVLEVLDDEDFSIKELALSLISEMLKSQKDAMEDSVEIVIEKLLHVSKDTVPKVSTEAEQCLTTVLSQYDPFRCLSVIVPLLVTEDEKTLVACINCLTKLVGRLSQEELMDQLSSFLPAVFEAFGSQSADVRKTVVFCLVDIYIMLGKAFLPYLEGLNSTQVRLVTIYANRISQARNGAPIDADT</sequence>
<gene>
    <name type="primary">CLASP</name>
    <name type="ordered locus">At2g20190/At2g20200</name>
    <name type="ORF">T2G17.1/F11A3.25</name>
</gene>
<dbReference type="EMBL" id="AC006081">
    <property type="protein sequence ID" value="AAD24379.1"/>
    <property type="status" value="ALT_SEQ"/>
    <property type="molecule type" value="Genomic_DNA"/>
</dbReference>
<dbReference type="EMBL" id="AC006569">
    <property type="protein sequence ID" value="AAD21767.1"/>
    <property type="status" value="ALT_SEQ"/>
    <property type="molecule type" value="Genomic_DNA"/>
</dbReference>
<dbReference type="EMBL" id="CP002685">
    <property type="protein sequence ID" value="AEC06980.1"/>
    <property type="molecule type" value="Genomic_DNA"/>
</dbReference>
<dbReference type="EMBL" id="AY091025">
    <property type="protein sequence ID" value="AAM13846.1"/>
    <property type="molecule type" value="mRNA"/>
</dbReference>
<dbReference type="EMBL" id="AK226745">
    <property type="protein sequence ID" value="BAE98846.1"/>
    <property type="molecule type" value="mRNA"/>
</dbReference>
<dbReference type="PIR" id="B84586">
    <property type="entry name" value="B84586"/>
</dbReference>
<dbReference type="PIR" id="C84586">
    <property type="entry name" value="C84586"/>
</dbReference>
<dbReference type="RefSeq" id="NP_849997.2">
    <property type="nucleotide sequence ID" value="NM_179666.5"/>
</dbReference>
<dbReference type="SMR" id="Q8RWY6"/>
<dbReference type="BioGRID" id="1893">
    <property type="interactions" value="2"/>
</dbReference>
<dbReference type="FunCoup" id="Q8RWY6">
    <property type="interactions" value="3077"/>
</dbReference>
<dbReference type="STRING" id="3702.Q8RWY6"/>
<dbReference type="iPTMnet" id="Q8RWY6"/>
<dbReference type="PaxDb" id="3702-AT2G20190.1"/>
<dbReference type="ProteomicsDB" id="246709"/>
<dbReference type="EnsemblPlants" id="AT2G20190.1">
    <property type="protein sequence ID" value="AT2G20190.1"/>
    <property type="gene ID" value="AT2G20190"/>
</dbReference>
<dbReference type="GeneID" id="816539"/>
<dbReference type="Gramene" id="AT2G20190.1">
    <property type="protein sequence ID" value="AT2G20190.1"/>
    <property type="gene ID" value="AT2G20190"/>
</dbReference>
<dbReference type="KEGG" id="ath:AT2G20190"/>
<dbReference type="Araport" id="AT2G20190"/>
<dbReference type="TAIR" id="AT2G20190">
    <property type="gene designation" value="CLASP"/>
</dbReference>
<dbReference type="eggNOG" id="KOG2956">
    <property type="taxonomic scope" value="Eukaryota"/>
</dbReference>
<dbReference type="HOGENOM" id="CLU_002943_0_0_1"/>
<dbReference type="InParanoid" id="Q8RWY6"/>
<dbReference type="OMA" id="KMRHNWL"/>
<dbReference type="OrthoDB" id="46159at2759"/>
<dbReference type="PhylomeDB" id="Q8RWY6"/>
<dbReference type="PRO" id="PR:Q8RWY6"/>
<dbReference type="Proteomes" id="UP000006548">
    <property type="component" value="Chromosome 2"/>
</dbReference>
<dbReference type="ExpressionAtlas" id="Q8RWY6">
    <property type="expression patterns" value="baseline and differential"/>
</dbReference>
<dbReference type="GO" id="GO:0005938">
    <property type="term" value="C:cell cortex"/>
    <property type="evidence" value="ECO:0000314"/>
    <property type="project" value="UniProtKB"/>
</dbReference>
<dbReference type="GO" id="GO:0005881">
    <property type="term" value="C:cytoplasmic microtubule"/>
    <property type="evidence" value="ECO:0000318"/>
    <property type="project" value="GO_Central"/>
</dbReference>
<dbReference type="GO" id="GO:0005739">
    <property type="term" value="C:mitochondrion"/>
    <property type="evidence" value="ECO:0007005"/>
    <property type="project" value="TAIR"/>
</dbReference>
<dbReference type="GO" id="GO:0009524">
    <property type="term" value="C:phragmoplast"/>
    <property type="evidence" value="ECO:0000314"/>
    <property type="project" value="UniProtKB"/>
</dbReference>
<dbReference type="GO" id="GO:0009506">
    <property type="term" value="C:plasmodesma"/>
    <property type="evidence" value="ECO:0007005"/>
    <property type="project" value="TAIR"/>
</dbReference>
<dbReference type="GO" id="GO:0005876">
    <property type="term" value="C:spindle microtubule"/>
    <property type="evidence" value="ECO:0000314"/>
    <property type="project" value="TAIR"/>
</dbReference>
<dbReference type="GO" id="GO:0008017">
    <property type="term" value="F:microtubule binding"/>
    <property type="evidence" value="ECO:0000318"/>
    <property type="project" value="GO_Central"/>
</dbReference>
<dbReference type="GO" id="GO:0051010">
    <property type="term" value="F:microtubule plus-end binding"/>
    <property type="evidence" value="ECO:0000314"/>
    <property type="project" value="UniProtKB"/>
</dbReference>
<dbReference type="GO" id="GO:0051301">
    <property type="term" value="P:cell division"/>
    <property type="evidence" value="ECO:0007669"/>
    <property type="project" value="UniProtKB-KW"/>
</dbReference>
<dbReference type="GO" id="GO:0043622">
    <property type="term" value="P:cortical microtubule organization"/>
    <property type="evidence" value="ECO:0000314"/>
    <property type="project" value="UniProtKB"/>
</dbReference>
<dbReference type="GO" id="GO:0000226">
    <property type="term" value="P:microtubule cytoskeleton organization"/>
    <property type="evidence" value="ECO:0000318"/>
    <property type="project" value="GO_Central"/>
</dbReference>
<dbReference type="GO" id="GO:0000278">
    <property type="term" value="P:mitotic cell cycle"/>
    <property type="evidence" value="ECO:0000315"/>
    <property type="project" value="TAIR"/>
</dbReference>
<dbReference type="GO" id="GO:0007026">
    <property type="term" value="P:negative regulation of microtubule depolymerization"/>
    <property type="evidence" value="ECO:0000315"/>
    <property type="project" value="UniProtKB"/>
</dbReference>
<dbReference type="GO" id="GO:0051781">
    <property type="term" value="P:positive regulation of cell division"/>
    <property type="evidence" value="ECO:0000315"/>
    <property type="project" value="TAIR"/>
</dbReference>
<dbReference type="GO" id="GO:0050821">
    <property type="term" value="P:protein stabilization"/>
    <property type="evidence" value="ECO:0000315"/>
    <property type="project" value="TAIR"/>
</dbReference>
<dbReference type="GO" id="GO:0009826">
    <property type="term" value="P:unidimensional cell growth"/>
    <property type="evidence" value="ECO:0000315"/>
    <property type="project" value="TAIR"/>
</dbReference>
<dbReference type="FunFam" id="1.25.10.10:FF:001239">
    <property type="entry name" value="CLIP-associated protein"/>
    <property type="match status" value="1"/>
</dbReference>
<dbReference type="FunFam" id="1.25.10.10:FF:000580">
    <property type="entry name" value="Protein peg1"/>
    <property type="match status" value="1"/>
</dbReference>
<dbReference type="Gene3D" id="1.25.10.10">
    <property type="entry name" value="Leucine-rich Repeat Variant"/>
    <property type="match status" value="4"/>
</dbReference>
<dbReference type="InterPro" id="IPR011989">
    <property type="entry name" value="ARM-like"/>
</dbReference>
<dbReference type="InterPro" id="IPR016024">
    <property type="entry name" value="ARM-type_fold"/>
</dbReference>
<dbReference type="InterPro" id="IPR024395">
    <property type="entry name" value="CLASP_N_dom"/>
</dbReference>
<dbReference type="InterPro" id="IPR021133">
    <property type="entry name" value="HEAT_type_2"/>
</dbReference>
<dbReference type="InterPro" id="IPR034085">
    <property type="entry name" value="TOG"/>
</dbReference>
<dbReference type="PANTHER" id="PTHR21567">
    <property type="entry name" value="CLASP"/>
    <property type="match status" value="1"/>
</dbReference>
<dbReference type="PANTHER" id="PTHR21567:SF9">
    <property type="entry name" value="CLIP-ASSOCIATING PROTEIN"/>
    <property type="match status" value="1"/>
</dbReference>
<dbReference type="Pfam" id="PF21040">
    <property type="entry name" value="CEP104-like_TOG"/>
    <property type="match status" value="3"/>
</dbReference>
<dbReference type="Pfam" id="PF12348">
    <property type="entry name" value="CLASP_N"/>
    <property type="match status" value="1"/>
</dbReference>
<dbReference type="SMART" id="SM01349">
    <property type="entry name" value="TOG"/>
    <property type="match status" value="4"/>
</dbReference>
<dbReference type="SUPFAM" id="SSF48371">
    <property type="entry name" value="ARM repeat"/>
    <property type="match status" value="2"/>
</dbReference>
<dbReference type="PROSITE" id="PS50077">
    <property type="entry name" value="HEAT_REPEAT"/>
    <property type="match status" value="1"/>
</dbReference>
<protein>
    <recommendedName>
        <fullName>CLIP-associated protein</fullName>
        <shortName>AtCLASP</shortName>
    </recommendedName>
</protein>
<feature type="chain" id="PRO_0000421378" description="CLIP-associated protein">
    <location>
        <begin position="1"/>
        <end position="1439"/>
    </location>
</feature>
<feature type="repeat" description="HEAT 1">
    <location>
        <begin position="1"/>
        <end position="32"/>
    </location>
</feature>
<feature type="repeat" description="HEAT 2">
    <location>
        <begin position="36"/>
        <end position="74"/>
    </location>
</feature>
<feature type="repeat" description="HEAT 3">
    <location>
        <begin position="77"/>
        <end position="115"/>
    </location>
</feature>
<feature type="repeat" description="HEAT 4">
    <location>
        <begin position="154"/>
        <end position="192"/>
    </location>
</feature>
<feature type="repeat" description="HEAT 5">
    <location>
        <begin position="281"/>
        <end position="319"/>
    </location>
</feature>
<feature type="repeat" description="HEAT 6">
    <location>
        <begin position="325"/>
        <end position="363"/>
    </location>
</feature>
<feature type="repeat" description="HEAT 7">
    <location>
        <begin position="366"/>
        <end position="401"/>
    </location>
</feature>
<feature type="repeat" description="HEAT 8">
    <location>
        <begin position="402"/>
        <end position="439"/>
    </location>
</feature>
<feature type="repeat" description="HEAT 9">
    <location>
        <begin position="486"/>
        <end position="525"/>
    </location>
</feature>
<feature type="repeat" description="HEAT 10">
    <location>
        <begin position="809"/>
        <end position="830"/>
    </location>
</feature>
<feature type="repeat" description="HEAT 11">
    <location>
        <begin position="831"/>
        <end position="869"/>
    </location>
</feature>
<feature type="repeat" description="HEAT 12">
    <location>
        <begin position="872"/>
        <end position="910"/>
    </location>
</feature>
<feature type="repeat" description="HEAT 13">
    <location>
        <begin position="912"/>
        <end position="950"/>
    </location>
</feature>
<feature type="repeat" description="HEAT 14">
    <location>
        <begin position="954"/>
        <end position="992"/>
    </location>
</feature>
<feature type="repeat" description="HEAT 15">
    <location>
        <begin position="994"/>
        <end position="1031"/>
    </location>
</feature>
<feature type="repeat" description="HEAT 16">
    <location>
        <begin position="1201"/>
        <end position="1239"/>
    </location>
</feature>
<feature type="repeat" description="HEAT 17">
    <location>
        <begin position="1246"/>
        <end position="1284"/>
    </location>
</feature>
<feature type="repeat" description="HEAT 18">
    <location>
        <begin position="1287"/>
        <end position="1325"/>
    </location>
</feature>
<feature type="repeat" description="HEAT 19">
    <location>
        <begin position="1327"/>
        <end position="1360"/>
    </location>
</feature>
<feature type="repeat" description="HEAT 20">
    <location>
        <begin position="1364"/>
        <end position="1402"/>
    </location>
</feature>
<feature type="repeat" description="HEAT 21">
    <location>
        <begin position="1405"/>
        <end position="1439"/>
    </location>
</feature>
<feature type="region of interest" description="Disordered" evidence="1">
    <location>
        <begin position="238"/>
        <end position="264"/>
    </location>
</feature>
<feature type="region of interest" description="Disordered" evidence="1">
    <location>
        <begin position="503"/>
        <end position="539"/>
    </location>
</feature>
<feature type="region of interest" description="Disordered" evidence="1">
    <location>
        <begin position="611"/>
        <end position="660"/>
    </location>
</feature>
<feature type="region of interest" description="Disordered" evidence="1">
    <location>
        <begin position="672"/>
        <end position="715"/>
    </location>
</feature>
<feature type="region of interest" description="Disordered" evidence="1">
    <location>
        <begin position="1074"/>
        <end position="1101"/>
    </location>
</feature>
<feature type="compositionally biased region" description="Polar residues" evidence="1">
    <location>
        <begin position="522"/>
        <end position="532"/>
    </location>
</feature>
<feature type="compositionally biased region" description="Low complexity" evidence="1">
    <location>
        <begin position="632"/>
        <end position="649"/>
    </location>
</feature>
<feature type="compositionally biased region" description="Polar residues" evidence="1">
    <location>
        <begin position="672"/>
        <end position="696"/>
    </location>
</feature>
<feature type="compositionally biased region" description="Basic and acidic residues" evidence="1">
    <location>
        <begin position="699"/>
        <end position="715"/>
    </location>
</feature>
<feature type="compositionally biased region" description="Polar residues" evidence="1">
    <location>
        <begin position="1074"/>
        <end position="1088"/>
    </location>
</feature>
<feature type="modified residue" description="N-acetylmethionine" evidence="9">
    <location>
        <position position="1"/>
    </location>
</feature>
<proteinExistence type="evidence at protein level"/>